<gene>
    <name evidence="1" type="primary">rpsJ</name>
    <name type="ordered locus">DVU_1302</name>
</gene>
<evidence type="ECO:0000255" key="1">
    <source>
        <dbReference type="HAMAP-Rule" id="MF_00508"/>
    </source>
</evidence>
<evidence type="ECO:0000305" key="2"/>
<feature type="chain" id="PRO_0000146528" description="Small ribosomal subunit protein uS10">
    <location>
        <begin position="1"/>
        <end position="105"/>
    </location>
</feature>
<dbReference type="EMBL" id="AE017285">
    <property type="protein sequence ID" value="AAS95780.1"/>
    <property type="molecule type" value="Genomic_DNA"/>
</dbReference>
<dbReference type="RefSeq" id="WP_010938597.1">
    <property type="nucleotide sequence ID" value="NZ_CABHLV010000001.1"/>
</dbReference>
<dbReference type="RefSeq" id="YP_010521.1">
    <property type="nucleotide sequence ID" value="NC_002937.3"/>
</dbReference>
<dbReference type="SMR" id="Q72CI1"/>
<dbReference type="STRING" id="882.DVU_1302"/>
<dbReference type="PaxDb" id="882-DVU_1302"/>
<dbReference type="EnsemblBacteria" id="AAS95780">
    <property type="protein sequence ID" value="AAS95780"/>
    <property type="gene ID" value="DVU_1302"/>
</dbReference>
<dbReference type="KEGG" id="dvu:DVU_1302"/>
<dbReference type="PATRIC" id="fig|882.5.peg.1214"/>
<dbReference type="eggNOG" id="COG0051">
    <property type="taxonomic scope" value="Bacteria"/>
</dbReference>
<dbReference type="HOGENOM" id="CLU_122625_1_3_7"/>
<dbReference type="OrthoDB" id="9804464at2"/>
<dbReference type="PhylomeDB" id="Q72CI1"/>
<dbReference type="Proteomes" id="UP000002194">
    <property type="component" value="Chromosome"/>
</dbReference>
<dbReference type="GO" id="GO:1990904">
    <property type="term" value="C:ribonucleoprotein complex"/>
    <property type="evidence" value="ECO:0007669"/>
    <property type="project" value="UniProtKB-KW"/>
</dbReference>
<dbReference type="GO" id="GO:0005840">
    <property type="term" value="C:ribosome"/>
    <property type="evidence" value="ECO:0007669"/>
    <property type="project" value="UniProtKB-KW"/>
</dbReference>
<dbReference type="GO" id="GO:0003735">
    <property type="term" value="F:structural constituent of ribosome"/>
    <property type="evidence" value="ECO:0007669"/>
    <property type="project" value="InterPro"/>
</dbReference>
<dbReference type="GO" id="GO:0000049">
    <property type="term" value="F:tRNA binding"/>
    <property type="evidence" value="ECO:0007669"/>
    <property type="project" value="UniProtKB-UniRule"/>
</dbReference>
<dbReference type="GO" id="GO:0006412">
    <property type="term" value="P:translation"/>
    <property type="evidence" value="ECO:0007669"/>
    <property type="project" value="UniProtKB-UniRule"/>
</dbReference>
<dbReference type="FunFam" id="3.30.70.600:FF:000003">
    <property type="entry name" value="30S ribosomal protein S10"/>
    <property type="match status" value="1"/>
</dbReference>
<dbReference type="Gene3D" id="3.30.70.600">
    <property type="entry name" value="Ribosomal protein S10 domain"/>
    <property type="match status" value="1"/>
</dbReference>
<dbReference type="HAMAP" id="MF_00508">
    <property type="entry name" value="Ribosomal_uS10"/>
    <property type="match status" value="1"/>
</dbReference>
<dbReference type="InterPro" id="IPR001848">
    <property type="entry name" value="Ribosomal_uS10"/>
</dbReference>
<dbReference type="InterPro" id="IPR018268">
    <property type="entry name" value="Ribosomal_uS10_CS"/>
</dbReference>
<dbReference type="InterPro" id="IPR027486">
    <property type="entry name" value="Ribosomal_uS10_dom"/>
</dbReference>
<dbReference type="InterPro" id="IPR036838">
    <property type="entry name" value="Ribosomal_uS10_dom_sf"/>
</dbReference>
<dbReference type="NCBIfam" id="NF001861">
    <property type="entry name" value="PRK00596.1"/>
    <property type="match status" value="1"/>
</dbReference>
<dbReference type="NCBIfam" id="TIGR01049">
    <property type="entry name" value="rpsJ_bact"/>
    <property type="match status" value="1"/>
</dbReference>
<dbReference type="PANTHER" id="PTHR11700">
    <property type="entry name" value="30S RIBOSOMAL PROTEIN S10 FAMILY MEMBER"/>
    <property type="match status" value="1"/>
</dbReference>
<dbReference type="Pfam" id="PF00338">
    <property type="entry name" value="Ribosomal_S10"/>
    <property type="match status" value="1"/>
</dbReference>
<dbReference type="PRINTS" id="PR00971">
    <property type="entry name" value="RIBOSOMALS10"/>
</dbReference>
<dbReference type="SMART" id="SM01403">
    <property type="entry name" value="Ribosomal_S10"/>
    <property type="match status" value="1"/>
</dbReference>
<dbReference type="SUPFAM" id="SSF54999">
    <property type="entry name" value="Ribosomal protein S10"/>
    <property type="match status" value="1"/>
</dbReference>
<dbReference type="PROSITE" id="PS00361">
    <property type="entry name" value="RIBOSOMAL_S10"/>
    <property type="match status" value="1"/>
</dbReference>
<proteinExistence type="inferred from homology"/>
<accession>Q72CI1</accession>
<reference key="1">
    <citation type="journal article" date="2004" name="Nat. Biotechnol.">
        <title>The genome sequence of the anaerobic, sulfate-reducing bacterium Desulfovibrio vulgaris Hildenborough.</title>
        <authorList>
            <person name="Heidelberg J.F."/>
            <person name="Seshadri R."/>
            <person name="Haveman S.A."/>
            <person name="Hemme C.L."/>
            <person name="Paulsen I.T."/>
            <person name="Kolonay J.F."/>
            <person name="Eisen J.A."/>
            <person name="Ward N.L."/>
            <person name="Methe B.A."/>
            <person name="Brinkac L.M."/>
            <person name="Daugherty S.C."/>
            <person name="DeBoy R.T."/>
            <person name="Dodson R.J."/>
            <person name="Durkin A.S."/>
            <person name="Madupu R."/>
            <person name="Nelson W.C."/>
            <person name="Sullivan S.A."/>
            <person name="Fouts D.E."/>
            <person name="Haft D.H."/>
            <person name="Selengut J."/>
            <person name="Peterson J.D."/>
            <person name="Davidsen T.M."/>
            <person name="Zafar N."/>
            <person name="Zhou L."/>
            <person name="Radune D."/>
            <person name="Dimitrov G."/>
            <person name="Hance M."/>
            <person name="Tran K."/>
            <person name="Khouri H.M."/>
            <person name="Gill J."/>
            <person name="Utterback T.R."/>
            <person name="Feldblyum T.V."/>
            <person name="Wall J.D."/>
            <person name="Voordouw G."/>
            <person name="Fraser C.M."/>
        </authorList>
    </citation>
    <scope>NUCLEOTIDE SEQUENCE [LARGE SCALE GENOMIC DNA]</scope>
    <source>
        <strain>ATCC 29579 / DSM 644 / CCUG 34227 / NCIMB 8303 / VKM B-1760 / Hildenborough</strain>
    </source>
</reference>
<name>RS10_NITV2</name>
<keyword id="KW-1185">Reference proteome</keyword>
<keyword id="KW-0687">Ribonucleoprotein</keyword>
<keyword id="KW-0689">Ribosomal protein</keyword>
<protein>
    <recommendedName>
        <fullName evidence="1">Small ribosomal subunit protein uS10</fullName>
    </recommendedName>
    <alternativeName>
        <fullName evidence="2">30S ribosomal protein S10</fullName>
    </alternativeName>
</protein>
<sequence length="105" mass="11752">MTTVSSDRIRIKLKAYDYRILDKAVAEIVDTARNTGAGVAGPIPLPTNIHKFTVNRSVHVDKKSREQFEMRIHKRLMDILEPTQQTVDALGKLSLPAGVDVEIKL</sequence>
<organism>
    <name type="scientific">Nitratidesulfovibrio vulgaris (strain ATCC 29579 / DSM 644 / CCUG 34227 / NCIMB 8303 / VKM B-1760 / Hildenborough)</name>
    <name type="common">Desulfovibrio vulgaris</name>
    <dbReference type="NCBI Taxonomy" id="882"/>
    <lineage>
        <taxon>Bacteria</taxon>
        <taxon>Pseudomonadati</taxon>
        <taxon>Thermodesulfobacteriota</taxon>
        <taxon>Desulfovibrionia</taxon>
        <taxon>Desulfovibrionales</taxon>
        <taxon>Desulfovibrionaceae</taxon>
        <taxon>Nitratidesulfovibrio</taxon>
    </lineage>
</organism>
<comment type="function">
    <text evidence="1">Involved in the binding of tRNA to the ribosomes.</text>
</comment>
<comment type="subunit">
    <text evidence="1">Part of the 30S ribosomal subunit.</text>
</comment>
<comment type="similarity">
    <text evidence="1">Belongs to the universal ribosomal protein uS10 family.</text>
</comment>